<sequence length="376" mass="39767">MSKAVLVLEDGRVFTGRPFGATGQALGEAVFSTGMSGYQETLTDPSYHRQIVVATAPQIGNTGWNGEDSESRGERIWVAGYAVRDPSPRASNWRATGTLEDELIRQRIVGIAGIDTRAVVRHLRSRGSMKAGVFSDGALAEPADLIARVRAQQSMLGADLAGEVSTAEPYVVEPDGPPGVSRFTVAALDLGIKTNTPRNFARRGIRCHVLPASTTFEQIAELNPHGVFLSNGPGDPATADHVVALTREVLGAGIPLFGICFGNQILGRALGLSTYKMVFGHRGINIPVVDHATGRVAVTAQNHGFALQGEAGQSFATPFGPAVVSHTCANDGVVEGVKLVDGRAFSVQYHPEAAAGPHDAEYLFDQFVELMAGEGR</sequence>
<feature type="chain" id="PRO_0000426936" description="Carbamoyl phosphate synthase small chain">
    <location>
        <begin position="1"/>
        <end position="376"/>
    </location>
</feature>
<feature type="domain" description="Glutamine amidotransferase type-1" evidence="1">
    <location>
        <begin position="184"/>
        <end position="376"/>
    </location>
</feature>
<feature type="region of interest" description="CPSase" evidence="1">
    <location>
        <begin position="1"/>
        <end position="183"/>
    </location>
</feature>
<feature type="region of interest" description="Nucleophile" evidence="1">
    <location>
        <begin position="1"/>
        <end position="181"/>
    </location>
</feature>
<feature type="active site" evidence="1">
    <location>
        <position position="350"/>
    </location>
</feature>
<feature type="active site" evidence="1">
    <location>
        <position position="352"/>
    </location>
</feature>
<feature type="binding site" evidence="1">
    <location>
        <position position="46"/>
    </location>
    <ligand>
        <name>L-glutamine</name>
        <dbReference type="ChEBI" id="CHEBI:58359"/>
    </ligand>
</feature>
<feature type="binding site" evidence="1">
    <location>
        <position position="232"/>
    </location>
    <ligand>
        <name>L-glutamine</name>
        <dbReference type="ChEBI" id="CHEBI:58359"/>
    </ligand>
</feature>
<feature type="binding site" evidence="1">
    <location>
        <position position="234"/>
    </location>
    <ligand>
        <name>L-glutamine</name>
        <dbReference type="ChEBI" id="CHEBI:58359"/>
    </ligand>
</feature>
<feature type="binding site" evidence="1">
    <location>
        <position position="261"/>
    </location>
    <ligand>
        <name>L-glutamine</name>
        <dbReference type="ChEBI" id="CHEBI:58359"/>
    </ligand>
</feature>
<feature type="binding site" evidence="1">
    <location>
        <position position="264"/>
    </location>
    <ligand>
        <name>L-glutamine</name>
        <dbReference type="ChEBI" id="CHEBI:58359"/>
    </ligand>
</feature>
<feature type="binding site" evidence="1">
    <location>
        <position position="302"/>
    </location>
    <ligand>
        <name>L-glutamine</name>
        <dbReference type="ChEBI" id="CHEBI:58359"/>
    </ligand>
</feature>
<feature type="binding site" evidence="1">
    <location>
        <position position="304"/>
    </location>
    <ligand>
        <name>L-glutamine</name>
        <dbReference type="ChEBI" id="CHEBI:58359"/>
    </ligand>
</feature>
<feature type="binding site" evidence="1">
    <location>
        <position position="305"/>
    </location>
    <ligand>
        <name>L-glutamine</name>
        <dbReference type="ChEBI" id="CHEBI:58359"/>
    </ligand>
</feature>
<proteinExistence type="inferred from homology"/>
<keyword id="KW-0028">Amino-acid biosynthesis</keyword>
<keyword id="KW-0055">Arginine biosynthesis</keyword>
<keyword id="KW-0067">ATP-binding</keyword>
<keyword id="KW-0315">Glutamine amidotransferase</keyword>
<keyword id="KW-0436">Ligase</keyword>
<keyword id="KW-0547">Nucleotide-binding</keyword>
<keyword id="KW-0665">Pyrimidine biosynthesis</keyword>
<keyword id="KW-1185">Reference proteome</keyword>
<accession>P9WPK4</accession>
<accession>L0T6P8</accession>
<accession>P71811</accession>
<comment type="function">
    <text evidence="1">Small subunit of the glutamine-dependent carbamoyl phosphate synthetase (CPSase). CPSase catalyzes the formation of carbamoyl phosphate from the ammonia moiety of glutamine, carbonate, and phosphate donated by ATP, constituting the first step of 2 biosynthetic pathways, one leading to arginine and/or urea and the other to pyrimidine nucleotides. The small subunit (glutamine amidotransferase) binds and cleaves glutamine to supply the large subunit with the substrate ammonia.</text>
</comment>
<comment type="catalytic activity">
    <reaction evidence="1">
        <text>hydrogencarbonate + L-glutamine + 2 ATP + H2O = carbamoyl phosphate + L-glutamate + 2 ADP + phosphate + 2 H(+)</text>
        <dbReference type="Rhea" id="RHEA:18633"/>
        <dbReference type="ChEBI" id="CHEBI:15377"/>
        <dbReference type="ChEBI" id="CHEBI:15378"/>
        <dbReference type="ChEBI" id="CHEBI:17544"/>
        <dbReference type="ChEBI" id="CHEBI:29985"/>
        <dbReference type="ChEBI" id="CHEBI:30616"/>
        <dbReference type="ChEBI" id="CHEBI:43474"/>
        <dbReference type="ChEBI" id="CHEBI:58228"/>
        <dbReference type="ChEBI" id="CHEBI:58359"/>
        <dbReference type="ChEBI" id="CHEBI:456216"/>
        <dbReference type="EC" id="6.3.5.5"/>
    </reaction>
</comment>
<comment type="catalytic activity">
    <molecule>Carbamoyl phosphate synthase small chain</molecule>
    <reaction evidence="1">
        <text>L-glutamine + H2O = L-glutamate + NH4(+)</text>
        <dbReference type="Rhea" id="RHEA:15889"/>
        <dbReference type="ChEBI" id="CHEBI:15377"/>
        <dbReference type="ChEBI" id="CHEBI:28938"/>
        <dbReference type="ChEBI" id="CHEBI:29985"/>
        <dbReference type="ChEBI" id="CHEBI:58359"/>
    </reaction>
</comment>
<comment type="pathway">
    <text evidence="1">Amino-acid biosynthesis; L-arginine biosynthesis; carbamoyl phosphate from bicarbonate: step 1/1.</text>
</comment>
<comment type="pathway">
    <text evidence="1">Pyrimidine metabolism; UMP biosynthesis via de novo pathway; (S)-dihydroorotate from bicarbonate: step 1/3.</text>
</comment>
<comment type="subunit">
    <text evidence="1">Composed of two chains; the small (or glutamine) chain promotes the hydrolysis of glutamine to ammonia, which is used by the large (or ammonia) chain to synthesize carbamoyl phosphate. Tetramer of heterodimers (alpha,beta)4.</text>
</comment>
<comment type="similarity">
    <text evidence="1">Belongs to the CarA family.</text>
</comment>
<comment type="sequence caution" evidence="2">
    <conflict type="erroneous initiation">
        <sequence resource="EMBL-CDS" id="AAK45692"/>
    </conflict>
</comment>
<protein>
    <recommendedName>
        <fullName evidence="1">Carbamoyl phosphate synthase small chain</fullName>
        <ecNumber evidence="1">6.3.5.5</ecNumber>
    </recommendedName>
    <alternativeName>
        <fullName evidence="1">Carbamoyl phosphate synthetase glutamine chain</fullName>
    </alternativeName>
</protein>
<organism>
    <name type="scientific">Mycobacterium tuberculosis (strain CDC 1551 / Oshkosh)</name>
    <dbReference type="NCBI Taxonomy" id="83331"/>
    <lineage>
        <taxon>Bacteria</taxon>
        <taxon>Bacillati</taxon>
        <taxon>Actinomycetota</taxon>
        <taxon>Actinomycetes</taxon>
        <taxon>Mycobacteriales</taxon>
        <taxon>Mycobacteriaceae</taxon>
        <taxon>Mycobacterium</taxon>
        <taxon>Mycobacterium tuberculosis complex</taxon>
    </lineage>
</organism>
<name>CARA_MYCTO</name>
<reference key="1">
    <citation type="journal article" date="2002" name="J. Bacteriol.">
        <title>Whole-genome comparison of Mycobacterium tuberculosis clinical and laboratory strains.</title>
        <authorList>
            <person name="Fleischmann R.D."/>
            <person name="Alland D."/>
            <person name="Eisen J.A."/>
            <person name="Carpenter L."/>
            <person name="White O."/>
            <person name="Peterson J.D."/>
            <person name="DeBoy R.T."/>
            <person name="Dodson R.J."/>
            <person name="Gwinn M.L."/>
            <person name="Haft D.H."/>
            <person name="Hickey E.K."/>
            <person name="Kolonay J.F."/>
            <person name="Nelson W.C."/>
            <person name="Umayam L.A."/>
            <person name="Ermolaeva M.D."/>
            <person name="Salzberg S.L."/>
            <person name="Delcher A."/>
            <person name="Utterback T.R."/>
            <person name="Weidman J.F."/>
            <person name="Khouri H.M."/>
            <person name="Gill J."/>
            <person name="Mikula A."/>
            <person name="Bishai W."/>
            <person name="Jacobs W.R. Jr."/>
            <person name="Venter J.C."/>
            <person name="Fraser C.M."/>
        </authorList>
    </citation>
    <scope>NUCLEOTIDE SEQUENCE [LARGE SCALE GENOMIC DNA]</scope>
    <source>
        <strain>CDC 1551 / Oshkosh</strain>
    </source>
</reference>
<dbReference type="EC" id="6.3.5.5" evidence="1"/>
<dbReference type="EMBL" id="AE000516">
    <property type="protein sequence ID" value="AAK45692.1"/>
    <property type="status" value="ALT_INIT"/>
    <property type="molecule type" value="Genomic_DNA"/>
</dbReference>
<dbReference type="PIR" id="D70959">
    <property type="entry name" value="D70959"/>
</dbReference>
<dbReference type="RefSeq" id="WP_003407208.1">
    <property type="nucleotide sequence ID" value="NZ_KK341227.1"/>
</dbReference>
<dbReference type="SMR" id="P9WPK4"/>
<dbReference type="GeneID" id="45425362"/>
<dbReference type="KEGG" id="mtc:MT1427"/>
<dbReference type="PATRIC" id="fig|83331.31.peg.1533"/>
<dbReference type="HOGENOM" id="CLU_035901_2_1_11"/>
<dbReference type="UniPathway" id="UPA00068">
    <property type="reaction ID" value="UER00171"/>
</dbReference>
<dbReference type="UniPathway" id="UPA00070">
    <property type="reaction ID" value="UER00115"/>
</dbReference>
<dbReference type="Proteomes" id="UP000001020">
    <property type="component" value="Chromosome"/>
</dbReference>
<dbReference type="GO" id="GO:0005524">
    <property type="term" value="F:ATP binding"/>
    <property type="evidence" value="ECO:0007669"/>
    <property type="project" value="UniProtKB-UniRule"/>
</dbReference>
<dbReference type="GO" id="GO:0004088">
    <property type="term" value="F:carbamoyl-phosphate synthase (glutamine-hydrolyzing) activity"/>
    <property type="evidence" value="ECO:0007669"/>
    <property type="project" value="UniProtKB-UniRule"/>
</dbReference>
<dbReference type="GO" id="GO:0004359">
    <property type="term" value="F:glutaminase activity"/>
    <property type="evidence" value="ECO:0007669"/>
    <property type="project" value="RHEA"/>
</dbReference>
<dbReference type="GO" id="GO:0006207">
    <property type="term" value="P:'de novo' pyrimidine nucleobase biosynthetic process"/>
    <property type="evidence" value="ECO:0007669"/>
    <property type="project" value="InterPro"/>
</dbReference>
<dbReference type="GO" id="GO:0044205">
    <property type="term" value="P:'de novo' UMP biosynthetic process"/>
    <property type="evidence" value="ECO:0007669"/>
    <property type="project" value="UniProtKB-UniRule"/>
</dbReference>
<dbReference type="GO" id="GO:0006541">
    <property type="term" value="P:glutamine metabolic process"/>
    <property type="evidence" value="ECO:0007669"/>
    <property type="project" value="InterPro"/>
</dbReference>
<dbReference type="GO" id="GO:0006526">
    <property type="term" value="P:L-arginine biosynthetic process"/>
    <property type="evidence" value="ECO:0007669"/>
    <property type="project" value="UniProtKB-UniRule"/>
</dbReference>
<dbReference type="CDD" id="cd01744">
    <property type="entry name" value="GATase1_CPSase"/>
    <property type="match status" value="1"/>
</dbReference>
<dbReference type="FunFam" id="3.40.50.880:FF:000018">
    <property type="entry name" value="Carbamoyl-phosphate synthase small chain"/>
    <property type="match status" value="1"/>
</dbReference>
<dbReference type="FunFam" id="3.50.30.20:FF:000001">
    <property type="entry name" value="Carbamoyl-phosphate synthase small chain"/>
    <property type="match status" value="1"/>
</dbReference>
<dbReference type="Gene3D" id="3.40.50.880">
    <property type="match status" value="1"/>
</dbReference>
<dbReference type="Gene3D" id="3.50.30.20">
    <property type="entry name" value="Carbamoyl-phosphate synthase small subunit, N-terminal domain"/>
    <property type="match status" value="1"/>
</dbReference>
<dbReference type="HAMAP" id="MF_01209">
    <property type="entry name" value="CPSase_S_chain"/>
    <property type="match status" value="1"/>
</dbReference>
<dbReference type="InterPro" id="IPR050472">
    <property type="entry name" value="Anth_synth/Amidotransfase"/>
</dbReference>
<dbReference type="InterPro" id="IPR006274">
    <property type="entry name" value="CarbamoylP_synth_ssu"/>
</dbReference>
<dbReference type="InterPro" id="IPR002474">
    <property type="entry name" value="CarbamoylP_synth_ssu_N"/>
</dbReference>
<dbReference type="InterPro" id="IPR036480">
    <property type="entry name" value="CarbP_synth_ssu_N_sf"/>
</dbReference>
<dbReference type="InterPro" id="IPR029062">
    <property type="entry name" value="Class_I_gatase-like"/>
</dbReference>
<dbReference type="InterPro" id="IPR035686">
    <property type="entry name" value="CPSase_GATase1"/>
</dbReference>
<dbReference type="InterPro" id="IPR017926">
    <property type="entry name" value="GATASE"/>
</dbReference>
<dbReference type="NCBIfam" id="TIGR01368">
    <property type="entry name" value="CPSaseIIsmall"/>
    <property type="match status" value="1"/>
</dbReference>
<dbReference type="NCBIfam" id="NF009475">
    <property type="entry name" value="PRK12838.1"/>
    <property type="match status" value="1"/>
</dbReference>
<dbReference type="PANTHER" id="PTHR43418:SF7">
    <property type="entry name" value="CARBAMOYL-PHOSPHATE SYNTHASE SMALL CHAIN"/>
    <property type="match status" value="1"/>
</dbReference>
<dbReference type="PANTHER" id="PTHR43418">
    <property type="entry name" value="MULTIFUNCTIONAL TRYPTOPHAN BIOSYNTHESIS PROTEIN-RELATED"/>
    <property type="match status" value="1"/>
</dbReference>
<dbReference type="Pfam" id="PF00988">
    <property type="entry name" value="CPSase_sm_chain"/>
    <property type="match status" value="1"/>
</dbReference>
<dbReference type="Pfam" id="PF00117">
    <property type="entry name" value="GATase"/>
    <property type="match status" value="1"/>
</dbReference>
<dbReference type="PRINTS" id="PR00097">
    <property type="entry name" value="ANTSNTHASEII"/>
</dbReference>
<dbReference type="PRINTS" id="PR00099">
    <property type="entry name" value="CPSGATASE"/>
</dbReference>
<dbReference type="PRINTS" id="PR00096">
    <property type="entry name" value="GATASE"/>
</dbReference>
<dbReference type="SMART" id="SM01097">
    <property type="entry name" value="CPSase_sm_chain"/>
    <property type="match status" value="1"/>
</dbReference>
<dbReference type="SUPFAM" id="SSF52021">
    <property type="entry name" value="Carbamoyl phosphate synthetase, small subunit N-terminal domain"/>
    <property type="match status" value="1"/>
</dbReference>
<dbReference type="SUPFAM" id="SSF52317">
    <property type="entry name" value="Class I glutamine amidotransferase-like"/>
    <property type="match status" value="1"/>
</dbReference>
<dbReference type="PROSITE" id="PS51273">
    <property type="entry name" value="GATASE_TYPE_1"/>
    <property type="match status" value="1"/>
</dbReference>
<gene>
    <name evidence="1" type="primary">carA</name>
    <name type="ordered locus">MT1427</name>
</gene>
<evidence type="ECO:0000255" key="1">
    <source>
        <dbReference type="HAMAP-Rule" id="MF_01209"/>
    </source>
</evidence>
<evidence type="ECO:0000305" key="2"/>